<protein>
    <recommendedName>
        <fullName evidence="1">L-arabinose isomerase</fullName>
        <ecNumber evidence="1">5.3.1.4</ecNumber>
    </recommendedName>
</protein>
<dbReference type="EC" id="5.3.1.4" evidence="1"/>
<dbReference type="EMBL" id="CP000462">
    <property type="protein sequence ID" value="ABK36959.1"/>
    <property type="molecule type" value="Genomic_DNA"/>
</dbReference>
<dbReference type="RefSeq" id="WP_011705775.1">
    <property type="nucleotide sequence ID" value="NC_008570.1"/>
</dbReference>
<dbReference type="RefSeq" id="YP_856431.1">
    <property type="nucleotide sequence ID" value="NC_008570.1"/>
</dbReference>
<dbReference type="SMR" id="A0KJI0"/>
<dbReference type="STRING" id="380703.AHA_1900"/>
<dbReference type="EnsemblBacteria" id="ABK36959">
    <property type="protein sequence ID" value="ABK36959"/>
    <property type="gene ID" value="AHA_1900"/>
</dbReference>
<dbReference type="GeneID" id="4488672"/>
<dbReference type="KEGG" id="aha:AHA_1900"/>
<dbReference type="PATRIC" id="fig|380703.7.peg.1913"/>
<dbReference type="eggNOG" id="COG2160">
    <property type="taxonomic scope" value="Bacteria"/>
</dbReference>
<dbReference type="HOGENOM" id="CLU_045663_0_0_6"/>
<dbReference type="OrthoDB" id="9765600at2"/>
<dbReference type="UniPathway" id="UPA00145">
    <property type="reaction ID" value="UER00565"/>
</dbReference>
<dbReference type="Proteomes" id="UP000000756">
    <property type="component" value="Chromosome"/>
</dbReference>
<dbReference type="GO" id="GO:0005829">
    <property type="term" value="C:cytosol"/>
    <property type="evidence" value="ECO:0007669"/>
    <property type="project" value="TreeGrafter"/>
</dbReference>
<dbReference type="GO" id="GO:0008733">
    <property type="term" value="F:L-arabinose isomerase activity"/>
    <property type="evidence" value="ECO:0007669"/>
    <property type="project" value="UniProtKB-UniRule"/>
</dbReference>
<dbReference type="GO" id="GO:0030145">
    <property type="term" value="F:manganese ion binding"/>
    <property type="evidence" value="ECO:0007669"/>
    <property type="project" value="UniProtKB-UniRule"/>
</dbReference>
<dbReference type="GO" id="GO:0019569">
    <property type="term" value="P:L-arabinose catabolic process to xylulose 5-phosphate"/>
    <property type="evidence" value="ECO:0007669"/>
    <property type="project" value="UniProtKB-UniRule"/>
</dbReference>
<dbReference type="CDD" id="cd03557">
    <property type="entry name" value="L-arabinose_isomerase"/>
    <property type="match status" value="1"/>
</dbReference>
<dbReference type="Gene3D" id="3.40.50.10940">
    <property type="match status" value="1"/>
</dbReference>
<dbReference type="HAMAP" id="MF_00519">
    <property type="entry name" value="Arabinose_Isome"/>
    <property type="match status" value="1"/>
</dbReference>
<dbReference type="InterPro" id="IPR024664">
    <property type="entry name" value="Ara_Isoase_C"/>
</dbReference>
<dbReference type="InterPro" id="IPR055390">
    <property type="entry name" value="AraA_central"/>
</dbReference>
<dbReference type="InterPro" id="IPR055389">
    <property type="entry name" value="AraA_N"/>
</dbReference>
<dbReference type="InterPro" id="IPR038583">
    <property type="entry name" value="AraA_N_sf"/>
</dbReference>
<dbReference type="InterPro" id="IPR004216">
    <property type="entry name" value="Fuc/Ara_isomerase_C"/>
</dbReference>
<dbReference type="InterPro" id="IPR009015">
    <property type="entry name" value="Fucose_isomerase_N/cen_sf"/>
</dbReference>
<dbReference type="InterPro" id="IPR003762">
    <property type="entry name" value="Lara_isomerase"/>
</dbReference>
<dbReference type="NCBIfam" id="NF002795">
    <property type="entry name" value="PRK02929.1"/>
    <property type="match status" value="1"/>
</dbReference>
<dbReference type="PANTHER" id="PTHR38464">
    <property type="entry name" value="L-ARABINOSE ISOMERASE"/>
    <property type="match status" value="1"/>
</dbReference>
<dbReference type="PANTHER" id="PTHR38464:SF1">
    <property type="entry name" value="L-ARABINOSE ISOMERASE"/>
    <property type="match status" value="1"/>
</dbReference>
<dbReference type="Pfam" id="PF24856">
    <property type="entry name" value="AraA_central"/>
    <property type="match status" value="1"/>
</dbReference>
<dbReference type="Pfam" id="PF02610">
    <property type="entry name" value="AraA_N"/>
    <property type="match status" value="1"/>
</dbReference>
<dbReference type="Pfam" id="PF11762">
    <property type="entry name" value="Arabinose_Iso_C"/>
    <property type="match status" value="1"/>
</dbReference>
<dbReference type="PIRSF" id="PIRSF001478">
    <property type="entry name" value="L-ara_isomerase"/>
    <property type="match status" value="1"/>
</dbReference>
<dbReference type="SUPFAM" id="SSF50443">
    <property type="entry name" value="FucI/AraA C-terminal domain-like"/>
    <property type="match status" value="1"/>
</dbReference>
<dbReference type="SUPFAM" id="SSF53743">
    <property type="entry name" value="FucI/AraA N-terminal and middle domains"/>
    <property type="match status" value="1"/>
</dbReference>
<gene>
    <name evidence="1" type="primary">araA</name>
    <name type="ordered locus">AHA_1900</name>
</gene>
<feature type="chain" id="PRO_0000312597" description="L-arabinose isomerase">
    <location>
        <begin position="1"/>
        <end position="499"/>
    </location>
</feature>
<feature type="binding site" evidence="1">
    <location>
        <position position="306"/>
    </location>
    <ligand>
        <name>Mn(2+)</name>
        <dbReference type="ChEBI" id="CHEBI:29035"/>
    </ligand>
</feature>
<feature type="binding site" evidence="1">
    <location>
        <position position="333"/>
    </location>
    <ligand>
        <name>Mn(2+)</name>
        <dbReference type="ChEBI" id="CHEBI:29035"/>
    </ligand>
</feature>
<feature type="binding site" evidence="1">
    <location>
        <position position="350"/>
    </location>
    <ligand>
        <name>Mn(2+)</name>
        <dbReference type="ChEBI" id="CHEBI:29035"/>
    </ligand>
</feature>
<feature type="binding site" evidence="1">
    <location>
        <position position="449"/>
    </location>
    <ligand>
        <name>Mn(2+)</name>
        <dbReference type="ChEBI" id="CHEBI:29035"/>
    </ligand>
</feature>
<keyword id="KW-0054">Arabinose catabolism</keyword>
<keyword id="KW-0119">Carbohydrate metabolism</keyword>
<keyword id="KW-0413">Isomerase</keyword>
<keyword id="KW-0464">Manganese</keyword>
<keyword id="KW-0479">Metal-binding</keyword>
<keyword id="KW-1185">Reference proteome</keyword>
<name>ARAA_AERHH</name>
<reference key="1">
    <citation type="journal article" date="2006" name="J. Bacteriol.">
        <title>Genome sequence of Aeromonas hydrophila ATCC 7966T: jack of all trades.</title>
        <authorList>
            <person name="Seshadri R."/>
            <person name="Joseph S.W."/>
            <person name="Chopra A.K."/>
            <person name="Sha J."/>
            <person name="Shaw J."/>
            <person name="Graf J."/>
            <person name="Haft D.H."/>
            <person name="Wu M."/>
            <person name="Ren Q."/>
            <person name="Rosovitz M.J."/>
            <person name="Madupu R."/>
            <person name="Tallon L."/>
            <person name="Kim M."/>
            <person name="Jin S."/>
            <person name="Vuong H."/>
            <person name="Stine O.C."/>
            <person name="Ali A."/>
            <person name="Horneman A.J."/>
            <person name="Heidelberg J.F."/>
        </authorList>
    </citation>
    <scope>NUCLEOTIDE SEQUENCE [LARGE SCALE GENOMIC DNA]</scope>
    <source>
        <strain>ATCC 7966 / DSM 30187 / BCRC 13018 / CCUG 14551 / JCM 1027 / KCTC 2358 / NCIMB 9240 / NCTC 8049</strain>
    </source>
</reference>
<evidence type="ECO:0000255" key="1">
    <source>
        <dbReference type="HAMAP-Rule" id="MF_00519"/>
    </source>
</evidence>
<comment type="function">
    <text evidence="1">Catalyzes the conversion of L-arabinose to L-ribulose.</text>
</comment>
<comment type="catalytic activity">
    <reaction evidence="1">
        <text>beta-L-arabinopyranose = L-ribulose</text>
        <dbReference type="Rhea" id="RHEA:14821"/>
        <dbReference type="ChEBI" id="CHEBI:16880"/>
        <dbReference type="ChEBI" id="CHEBI:40886"/>
        <dbReference type="EC" id="5.3.1.4"/>
    </reaction>
</comment>
<comment type="cofactor">
    <cofactor evidence="1">
        <name>Mn(2+)</name>
        <dbReference type="ChEBI" id="CHEBI:29035"/>
    </cofactor>
    <text evidence="1">Binds 1 Mn(2+) ion per subunit.</text>
</comment>
<comment type="pathway">
    <text evidence="1">Carbohydrate degradation; L-arabinose degradation via L-ribulose; D-xylulose 5-phosphate from L-arabinose (bacterial route): step 1/3.</text>
</comment>
<comment type="similarity">
    <text evidence="1">Belongs to the arabinose isomerase family.</text>
</comment>
<accession>A0KJI0</accession>
<proteinExistence type="inferred from homology"/>
<sequence length="499" mass="55374">MELMKQLEVWFLVGSQHLYGAATLKQVADHAHTITSQLNERAGLPVKIVLKPTGTTLDEISAIARDANHDQRCIGLMVWMHTFSPAKMWIPALSQLQKPLLQFHTQFNRDLPWSEIDMDFMNLNQTAHGGREFGFMGARLRLPRTVVVGHWQDEEAHRKLGNWMRVAAAIHDSRHLKIARFGDNMRNVAVTEGDKIEAQIQFGYQVNYHPVGDLVKVIDAVPASDIEALLAEYEESYTLTEAVQAGGVLRASLYEAARQELGMKKFLTDGGFGAFTTTFEDLHGLHQLPGLACQRLMQQGFGFGAEGDWKTAALLRTLKVMGTGLAGGTSFMEDYTYHLEAGNNLVLGAHMLEVCPSIAADKPVLDAQHLGIGKKADPARLLFAAPAGKAVNASLIDLGNRFRLVVNQLEVVDLPEAMPKLPVASALWQPMPDLQTSAEAWILAGAAHHSVFTQSVDIEQLRTFADLMGIEFVVIDKHTRIPELKQTLQWNEVYYKLCH</sequence>
<organism>
    <name type="scientific">Aeromonas hydrophila subsp. hydrophila (strain ATCC 7966 / DSM 30187 / BCRC 13018 / CCUG 14551 / JCM 1027 / KCTC 2358 / NCIMB 9240 / NCTC 8049)</name>
    <dbReference type="NCBI Taxonomy" id="380703"/>
    <lineage>
        <taxon>Bacteria</taxon>
        <taxon>Pseudomonadati</taxon>
        <taxon>Pseudomonadota</taxon>
        <taxon>Gammaproteobacteria</taxon>
        <taxon>Aeromonadales</taxon>
        <taxon>Aeromonadaceae</taxon>
        <taxon>Aeromonas</taxon>
    </lineage>
</organism>